<name>ECCB2_MYCTO</name>
<evidence type="ECO:0000250" key="1">
    <source>
        <dbReference type="UniProtKB" id="P9WNR7"/>
    </source>
</evidence>
<evidence type="ECO:0000255" key="2"/>
<evidence type="ECO:0000305" key="3"/>
<organism>
    <name type="scientific">Mycobacterium tuberculosis (strain CDC 1551 / Oshkosh)</name>
    <dbReference type="NCBI Taxonomy" id="83331"/>
    <lineage>
        <taxon>Bacteria</taxon>
        <taxon>Bacillati</taxon>
        <taxon>Actinomycetota</taxon>
        <taxon>Actinomycetes</taxon>
        <taxon>Mycobacteriales</taxon>
        <taxon>Mycobacteriaceae</taxon>
        <taxon>Mycobacterium</taxon>
        <taxon>Mycobacterium tuberculosis complex</taxon>
    </lineage>
</organism>
<dbReference type="EC" id="3.6.-.-" evidence="3"/>
<dbReference type="EMBL" id="AE000516">
    <property type="protein sequence ID" value="AAK48377.1"/>
    <property type="molecule type" value="Genomic_DNA"/>
</dbReference>
<dbReference type="PIR" id="H70598">
    <property type="entry name" value="H70598"/>
</dbReference>
<dbReference type="RefSeq" id="WP_003400065.1">
    <property type="nucleotide sequence ID" value="NZ_KK341228.1"/>
</dbReference>
<dbReference type="SMR" id="P9WNR4"/>
<dbReference type="KEGG" id="mtc:MT4011"/>
<dbReference type="PATRIC" id="fig|83331.31.peg.4318"/>
<dbReference type="HOGENOM" id="CLU_036302_3_0_11"/>
<dbReference type="Proteomes" id="UP000001020">
    <property type="component" value="Chromosome"/>
</dbReference>
<dbReference type="GO" id="GO:0005576">
    <property type="term" value="C:extracellular region"/>
    <property type="evidence" value="ECO:0007669"/>
    <property type="project" value="TreeGrafter"/>
</dbReference>
<dbReference type="GO" id="GO:0005886">
    <property type="term" value="C:plasma membrane"/>
    <property type="evidence" value="ECO:0007669"/>
    <property type="project" value="UniProtKB-SubCell"/>
</dbReference>
<dbReference type="GO" id="GO:0005524">
    <property type="term" value="F:ATP binding"/>
    <property type="evidence" value="ECO:0007669"/>
    <property type="project" value="UniProtKB-KW"/>
</dbReference>
<dbReference type="GO" id="GO:0016787">
    <property type="term" value="F:hydrolase activity"/>
    <property type="evidence" value="ECO:0007669"/>
    <property type="project" value="UniProtKB-KW"/>
</dbReference>
<dbReference type="Gene3D" id="3.30.2390.20">
    <property type="entry name" value="Type VII secretion system EccB, repeat 1 domain"/>
    <property type="match status" value="1"/>
</dbReference>
<dbReference type="Gene3D" id="2.40.50.910">
    <property type="entry name" value="Type VII secretion system EccB, repeat 3 domain"/>
    <property type="match status" value="1"/>
</dbReference>
<dbReference type="InterPro" id="IPR007795">
    <property type="entry name" value="T7SS_EccB"/>
</dbReference>
<dbReference type="InterPro" id="IPR044857">
    <property type="entry name" value="T7SS_EccB_R1"/>
</dbReference>
<dbReference type="InterPro" id="IPR042485">
    <property type="entry name" value="T7SS_EccB_R3"/>
</dbReference>
<dbReference type="NCBIfam" id="TIGR03919">
    <property type="entry name" value="T7SS_EccB"/>
    <property type="match status" value="1"/>
</dbReference>
<dbReference type="PANTHER" id="PTHR40765">
    <property type="entry name" value="ESX-2 SECRETION SYSTEM ATPASE ECCB2"/>
    <property type="match status" value="1"/>
</dbReference>
<dbReference type="PANTHER" id="PTHR40765:SF2">
    <property type="entry name" value="ESX-2 SECRETION SYSTEM ATPASE ECCB2"/>
    <property type="match status" value="1"/>
</dbReference>
<dbReference type="Pfam" id="PF05108">
    <property type="entry name" value="T7SS_ESX1_EccB"/>
    <property type="match status" value="1"/>
</dbReference>
<keyword id="KW-0067">ATP-binding</keyword>
<keyword id="KW-1003">Cell membrane</keyword>
<keyword id="KW-0378">Hydrolase</keyword>
<keyword id="KW-0472">Membrane</keyword>
<keyword id="KW-0547">Nucleotide-binding</keyword>
<keyword id="KW-1185">Reference proteome</keyword>
<keyword id="KW-0812">Transmembrane</keyword>
<keyword id="KW-1133">Transmembrane helix</keyword>
<sequence length="495" mass="51587">MPLSLSNRDQNSGHLFYNRRLRAATTRFSVRMKHDDRKQTAALALSMVLVAIAAGWMMLLNVLKPTGIVGDSAIIGDRDSGALYARIDGRLYPALNLTSARLATGTAGQPTWVKPAEIAKYPTGPLVGIPGAPAAMPVNRGAVSAWAVCDTAGRPRSADKPVVTSIAGPITGGGRATHLRDDAGLLVTFDGSTYVIWGGKRSQIDPTNRAVTLSLGLDPGVTSPIQISRALFDGLPATEPLRVPAVPEAGTPSTWVPGARVGSVLQAQTAGGGSQFYVLLPDGVQKISSFVADLLRSANSYGAAAPRVVTPDVLVHTPQVTSLPVEYYPAGRLNFVDTAADPTTCVSWEKASTDPQARVAVYNGRGLPVPPSMDSRIVRLVRDDRAPASVVATQVLVLPGAANFVTSTSGVITAESRESLFWVSGNGVRFGIANDEATLRALGLDPGAAVQAPWPLLRTFAAGPALSRDAALLARDTVPTLGQVAIVTTTAKAGA</sequence>
<proteinExistence type="inferred from homology"/>
<comment type="function">
    <text evidence="1">An ATPase (By similarity).</text>
</comment>
<comment type="subunit">
    <text evidence="1">Part of the ESX-2 / type VII secretion system (T7SS), which is composed of cytosolic and membrane components.</text>
</comment>
<comment type="subcellular location">
    <subcellularLocation>
        <location evidence="3">Cell membrane</location>
        <topology evidence="3">Single-pass membrane protein</topology>
    </subcellularLocation>
</comment>
<comment type="similarity">
    <text evidence="3">Belongs to the EccB family.</text>
</comment>
<accession>P9WNR4</accession>
<accession>L0TE37</accession>
<accession>O05449</accession>
<accession>Q7D4N1</accession>
<protein>
    <recommendedName>
        <fullName>ESX-2 secretion system ATPase EccB2</fullName>
        <ecNumber evidence="3">3.6.-.-</ecNumber>
    </recommendedName>
    <alternativeName>
        <fullName>ESX conserved component B2</fullName>
    </alternativeName>
    <alternativeName>
        <fullName>Type VII secretion system protein EccB2</fullName>
        <shortName>T7SS protein EccB2</shortName>
    </alternativeName>
</protein>
<reference key="1">
    <citation type="journal article" date="2002" name="J. Bacteriol.">
        <title>Whole-genome comparison of Mycobacterium tuberculosis clinical and laboratory strains.</title>
        <authorList>
            <person name="Fleischmann R.D."/>
            <person name="Alland D."/>
            <person name="Eisen J.A."/>
            <person name="Carpenter L."/>
            <person name="White O."/>
            <person name="Peterson J.D."/>
            <person name="DeBoy R.T."/>
            <person name="Dodson R.J."/>
            <person name="Gwinn M.L."/>
            <person name="Haft D.H."/>
            <person name="Hickey E.K."/>
            <person name="Kolonay J.F."/>
            <person name="Nelson W.C."/>
            <person name="Umayam L.A."/>
            <person name="Ermolaeva M.D."/>
            <person name="Salzberg S.L."/>
            <person name="Delcher A."/>
            <person name="Utterback T.R."/>
            <person name="Weidman J.F."/>
            <person name="Khouri H.M."/>
            <person name="Gill J."/>
            <person name="Mikula A."/>
            <person name="Bishai W."/>
            <person name="Jacobs W.R. Jr."/>
            <person name="Venter J.C."/>
            <person name="Fraser C.M."/>
        </authorList>
    </citation>
    <scope>NUCLEOTIDE SEQUENCE [LARGE SCALE GENOMIC DNA]</scope>
    <source>
        <strain>CDC 1551 / Oshkosh</strain>
    </source>
</reference>
<feature type="chain" id="PRO_0000427081" description="ESX-2 secretion system ATPase EccB2">
    <location>
        <begin position="1"/>
        <end position="495"/>
    </location>
</feature>
<feature type="transmembrane region" description="Helical" evidence="2">
    <location>
        <begin position="43"/>
        <end position="63"/>
    </location>
</feature>
<gene>
    <name type="primary">eccB2</name>
    <name type="ordered locus">MT4011</name>
</gene>